<name>NU1M_NOTEU</name>
<geneLocation type="mitochondrion"/>
<protein>
    <recommendedName>
        <fullName>NADH-ubiquinone oxidoreductase chain 1</fullName>
        <ecNumber evidence="1">7.1.1.2</ecNumber>
    </recommendedName>
    <alternativeName>
        <fullName>NADH dehydrogenase subunit 1</fullName>
    </alternativeName>
</protein>
<feature type="chain" id="PRO_0000117424" description="NADH-ubiquinone oxidoreductase chain 1">
    <location>
        <begin position="1"/>
        <end position="318"/>
    </location>
</feature>
<feature type="transmembrane region" description="Helical" evidence="3">
    <location>
        <begin position="2"/>
        <end position="22"/>
    </location>
</feature>
<feature type="transmembrane region" description="Helical" evidence="3">
    <location>
        <begin position="70"/>
        <end position="90"/>
    </location>
</feature>
<feature type="transmembrane region" description="Helical" evidence="3">
    <location>
        <begin position="100"/>
        <end position="120"/>
    </location>
</feature>
<feature type="transmembrane region" description="Helical" evidence="3">
    <location>
        <begin position="136"/>
        <end position="156"/>
    </location>
</feature>
<feature type="transmembrane region" description="Helical" evidence="3">
    <location>
        <begin position="172"/>
        <end position="192"/>
    </location>
</feature>
<feature type="transmembrane region" description="Helical" evidence="3">
    <location>
        <begin position="223"/>
        <end position="243"/>
    </location>
</feature>
<feature type="transmembrane region" description="Helical" evidence="3">
    <location>
        <begin position="253"/>
        <end position="273"/>
    </location>
</feature>
<feature type="transmembrane region" description="Helical" evidence="3">
    <location>
        <begin position="294"/>
        <end position="314"/>
    </location>
</feature>
<proteinExistence type="inferred from homology"/>
<organism>
    <name type="scientific">Notamacropus eugenii</name>
    <name type="common">Tammar wallaby</name>
    <name type="synonym">Macropus eugenii</name>
    <dbReference type="NCBI Taxonomy" id="9315"/>
    <lineage>
        <taxon>Eukaryota</taxon>
        <taxon>Metazoa</taxon>
        <taxon>Chordata</taxon>
        <taxon>Craniata</taxon>
        <taxon>Vertebrata</taxon>
        <taxon>Euteleostomi</taxon>
        <taxon>Mammalia</taxon>
        <taxon>Metatheria</taxon>
        <taxon>Diprotodontia</taxon>
        <taxon>Macropodidae</taxon>
        <taxon>Notamacropus</taxon>
    </lineage>
</organism>
<dbReference type="EC" id="7.1.1.2" evidence="1"/>
<dbReference type="EMBL" id="AB011221">
    <property type="protein sequence ID" value="BAA32113.1"/>
    <property type="molecule type" value="Genomic_DNA"/>
</dbReference>
<dbReference type="SMR" id="O78704"/>
<dbReference type="GO" id="GO:0005743">
    <property type="term" value="C:mitochondrial inner membrane"/>
    <property type="evidence" value="ECO:0000250"/>
    <property type="project" value="UniProtKB"/>
</dbReference>
<dbReference type="GO" id="GO:0008137">
    <property type="term" value="F:NADH dehydrogenase (ubiquinone) activity"/>
    <property type="evidence" value="ECO:0000250"/>
    <property type="project" value="UniProtKB"/>
</dbReference>
<dbReference type="GO" id="GO:0006120">
    <property type="term" value="P:mitochondrial electron transport, NADH to ubiquinone"/>
    <property type="evidence" value="ECO:0000250"/>
    <property type="project" value="UniProtKB"/>
</dbReference>
<dbReference type="GO" id="GO:0032981">
    <property type="term" value="P:mitochondrial respiratory chain complex I assembly"/>
    <property type="evidence" value="ECO:0000250"/>
    <property type="project" value="UniProtKB"/>
</dbReference>
<dbReference type="HAMAP" id="MF_01350">
    <property type="entry name" value="NDH1_NuoH"/>
    <property type="match status" value="1"/>
</dbReference>
<dbReference type="InterPro" id="IPR001694">
    <property type="entry name" value="NADH_UbQ_OxRdtase_su1/FPO"/>
</dbReference>
<dbReference type="InterPro" id="IPR018086">
    <property type="entry name" value="NADH_UbQ_OxRdtase_su1_CS"/>
</dbReference>
<dbReference type="PANTHER" id="PTHR11432">
    <property type="entry name" value="NADH DEHYDROGENASE SUBUNIT 1"/>
    <property type="match status" value="1"/>
</dbReference>
<dbReference type="PANTHER" id="PTHR11432:SF3">
    <property type="entry name" value="NADH-UBIQUINONE OXIDOREDUCTASE CHAIN 1"/>
    <property type="match status" value="1"/>
</dbReference>
<dbReference type="Pfam" id="PF00146">
    <property type="entry name" value="NADHdh"/>
    <property type="match status" value="1"/>
</dbReference>
<dbReference type="PROSITE" id="PS00667">
    <property type="entry name" value="COMPLEX1_ND1_1"/>
    <property type="match status" value="1"/>
</dbReference>
<dbReference type="PROSITE" id="PS00668">
    <property type="entry name" value="COMPLEX1_ND1_2"/>
    <property type="match status" value="1"/>
</dbReference>
<reference key="1">
    <citation type="journal article" date="1998" name="J. Mol. Evol.">
        <title>Conflict among individual mitochondrial proteins in resolving the phylogeny of eutherian orders.</title>
        <authorList>
            <person name="Cao Y."/>
            <person name="Janke A."/>
            <person name="Waddell P.J."/>
            <person name="Westerman M."/>
            <person name="Takenaka O."/>
            <person name="Murata S."/>
            <person name="Okada N."/>
            <person name="Paeaebo S."/>
            <person name="Hasegawa M."/>
        </authorList>
    </citation>
    <scope>NUCLEOTIDE SEQUENCE [GENOMIC DNA]</scope>
    <source>
        <tissue>Liver</tissue>
    </source>
</reference>
<sequence>MFVINLLLYIIPILLAVAFLTLVERKDLGYMQFRKGPNIVGPYGLLQPVADGIKLFTKEPLRPLTSSFNMFIIAPILALTLARTIWTPLPMPHTLIDLNLGLLFILSLSGLSVYSILWSGWASNSKYALIGALRAVAQTISYEVTLAIILLSIMLINGSFTLKNLLITQENMWLIVSTWPLAMMWYISTLAETNRAPFDLTEGESELVSGFNVEYAAGPFAMFFLAEYANIIAMNAMTAILFLGSSLNHNFSQLSTLSFMLKTLFLTFMFLWIRASYPRFRYDQLMYLLWKNFLPLTLALCLWFISIPIALSCIPPQI</sequence>
<accession>O78704</accession>
<evidence type="ECO:0000250" key="1">
    <source>
        <dbReference type="UniProtKB" id="P03886"/>
    </source>
</evidence>
<evidence type="ECO:0000250" key="2">
    <source>
        <dbReference type="UniProtKB" id="P03887"/>
    </source>
</evidence>
<evidence type="ECO:0000255" key="3"/>
<evidence type="ECO:0000305" key="4"/>
<keyword id="KW-0249">Electron transport</keyword>
<keyword id="KW-0472">Membrane</keyword>
<keyword id="KW-0496">Mitochondrion</keyword>
<keyword id="KW-0999">Mitochondrion inner membrane</keyword>
<keyword id="KW-0520">NAD</keyword>
<keyword id="KW-0679">Respiratory chain</keyword>
<keyword id="KW-1278">Translocase</keyword>
<keyword id="KW-0812">Transmembrane</keyword>
<keyword id="KW-1133">Transmembrane helix</keyword>
<keyword id="KW-0813">Transport</keyword>
<keyword id="KW-0830">Ubiquinone</keyword>
<gene>
    <name type="primary">MT-ND1</name>
    <name type="synonym">MTND1</name>
    <name type="synonym">NADH1</name>
    <name type="synonym">ND1</name>
</gene>
<comment type="function">
    <text evidence="1">Core subunit of the mitochondrial membrane respiratory chain NADH dehydrogenase (Complex I) which catalyzes electron transfer from NADH through the respiratory chain, using ubiquinone as an electron acceptor. Essential for the catalytic activity and assembly of complex I.</text>
</comment>
<comment type="catalytic activity">
    <reaction evidence="1">
        <text>a ubiquinone + NADH + 5 H(+)(in) = a ubiquinol + NAD(+) + 4 H(+)(out)</text>
        <dbReference type="Rhea" id="RHEA:29091"/>
        <dbReference type="Rhea" id="RHEA-COMP:9565"/>
        <dbReference type="Rhea" id="RHEA-COMP:9566"/>
        <dbReference type="ChEBI" id="CHEBI:15378"/>
        <dbReference type="ChEBI" id="CHEBI:16389"/>
        <dbReference type="ChEBI" id="CHEBI:17976"/>
        <dbReference type="ChEBI" id="CHEBI:57540"/>
        <dbReference type="ChEBI" id="CHEBI:57945"/>
        <dbReference type="EC" id="7.1.1.2"/>
    </reaction>
</comment>
<comment type="subunit">
    <text evidence="2">Core subunit of respiratory chain NADH dehydrogenase (Complex I) which is composed of 45 different subunits.</text>
</comment>
<comment type="subcellular location">
    <subcellularLocation>
        <location evidence="2">Mitochondrion inner membrane</location>
        <topology evidence="3">Multi-pass membrane protein</topology>
    </subcellularLocation>
</comment>
<comment type="similarity">
    <text evidence="4">Belongs to the complex I subunit 1 family.</text>
</comment>